<evidence type="ECO:0000255" key="1">
    <source>
        <dbReference type="HAMAP-Rule" id="MF_00022"/>
    </source>
</evidence>
<proteinExistence type="inferred from homology"/>
<sequence length="488" mass="54802">MTVSGTATGVRVRIAPSPTGEPHVGTAYIALFNYLFAKKHGGEFILRIEDTDATRSTPEFETKVLDALKWCGLEWKEGPDIGGPYGPYRQSDRKDMYQPYAQELLEKGHAFRCFCTPARLEQMRETQRAAGKPPKYDGLCLNLAAEEVTSRMAAGETTVIRMKIPTEGSCDFTDGVYGEVSIPWDSVDMQVLVKADGMPTYHMANVIDDHLMKITHVARGEEWLASVPKHILLYRYFGWDQPVFMHLSLMRNADKSKLSKRKNPTSISYYSALGYIPEALMNFLGLFFIQIAEGEELLTMDELSEKFDPENLSKAGAIFDIQKLDWLNGRWIREKLSEEEFQARVLTWAMENDRLKEGLRLSQTRISKLGELPDLAGFLLKSDLGLQPSDFAKIKSPPEEILEILNTVQPDLEKILEWNVETIEAELRAIADRMGKKLKVVVSPLFVAVSGSSRSLPLFDSMAILGRSVVRQRLKLASQAVAALVGSK</sequence>
<dbReference type="EC" id="6.1.1.17" evidence="1"/>
<dbReference type="EMBL" id="AM236080">
    <property type="protein sequence ID" value="CAK09673.1"/>
    <property type="molecule type" value="Genomic_DNA"/>
</dbReference>
<dbReference type="RefSeq" id="WP_011653584.1">
    <property type="nucleotide sequence ID" value="NC_008380.1"/>
</dbReference>
<dbReference type="SMR" id="Q1MBL0"/>
<dbReference type="EnsemblBacteria" id="CAK09673">
    <property type="protein sequence ID" value="CAK09673"/>
    <property type="gene ID" value="RL4184"/>
</dbReference>
<dbReference type="KEGG" id="rle:RL4184"/>
<dbReference type="eggNOG" id="COG0008">
    <property type="taxonomic scope" value="Bacteria"/>
</dbReference>
<dbReference type="HOGENOM" id="CLU_015768_6_3_5"/>
<dbReference type="Proteomes" id="UP000006575">
    <property type="component" value="Chromosome"/>
</dbReference>
<dbReference type="GO" id="GO:0005829">
    <property type="term" value="C:cytosol"/>
    <property type="evidence" value="ECO:0007669"/>
    <property type="project" value="TreeGrafter"/>
</dbReference>
<dbReference type="GO" id="GO:0005524">
    <property type="term" value="F:ATP binding"/>
    <property type="evidence" value="ECO:0007669"/>
    <property type="project" value="UniProtKB-UniRule"/>
</dbReference>
<dbReference type="GO" id="GO:0004818">
    <property type="term" value="F:glutamate-tRNA ligase activity"/>
    <property type="evidence" value="ECO:0007669"/>
    <property type="project" value="UniProtKB-UniRule"/>
</dbReference>
<dbReference type="GO" id="GO:0000049">
    <property type="term" value="F:tRNA binding"/>
    <property type="evidence" value="ECO:0007669"/>
    <property type="project" value="InterPro"/>
</dbReference>
<dbReference type="GO" id="GO:0008270">
    <property type="term" value="F:zinc ion binding"/>
    <property type="evidence" value="ECO:0007669"/>
    <property type="project" value="InterPro"/>
</dbReference>
<dbReference type="GO" id="GO:0006424">
    <property type="term" value="P:glutamyl-tRNA aminoacylation"/>
    <property type="evidence" value="ECO:0007669"/>
    <property type="project" value="UniProtKB-UniRule"/>
</dbReference>
<dbReference type="CDD" id="cd00808">
    <property type="entry name" value="GluRS_core"/>
    <property type="match status" value="1"/>
</dbReference>
<dbReference type="FunFam" id="3.40.50.620:FF:000045">
    <property type="entry name" value="Glutamate--tRNA ligase, mitochondrial"/>
    <property type="match status" value="1"/>
</dbReference>
<dbReference type="Gene3D" id="1.10.10.350">
    <property type="match status" value="1"/>
</dbReference>
<dbReference type="Gene3D" id="3.40.50.620">
    <property type="entry name" value="HUPs"/>
    <property type="match status" value="1"/>
</dbReference>
<dbReference type="HAMAP" id="MF_00022">
    <property type="entry name" value="Glu_tRNA_synth_type1"/>
    <property type="match status" value="1"/>
</dbReference>
<dbReference type="InterPro" id="IPR045462">
    <property type="entry name" value="aa-tRNA-synth_I_cd-bd"/>
</dbReference>
<dbReference type="InterPro" id="IPR020751">
    <property type="entry name" value="aa-tRNA-synth_I_codon-bd_sub2"/>
</dbReference>
<dbReference type="InterPro" id="IPR001412">
    <property type="entry name" value="aa-tRNA-synth_I_CS"/>
</dbReference>
<dbReference type="InterPro" id="IPR008925">
    <property type="entry name" value="aa_tRNA-synth_I_cd-bd_sf"/>
</dbReference>
<dbReference type="InterPro" id="IPR004527">
    <property type="entry name" value="Glu-tRNA-ligase_bac/mito"/>
</dbReference>
<dbReference type="InterPro" id="IPR000924">
    <property type="entry name" value="Glu/Gln-tRNA-synth"/>
</dbReference>
<dbReference type="InterPro" id="IPR020058">
    <property type="entry name" value="Glu/Gln-tRNA-synth_Ib_cat-dom"/>
</dbReference>
<dbReference type="InterPro" id="IPR049940">
    <property type="entry name" value="GluQ/Sye"/>
</dbReference>
<dbReference type="InterPro" id="IPR033910">
    <property type="entry name" value="GluRS_core"/>
</dbReference>
<dbReference type="InterPro" id="IPR014729">
    <property type="entry name" value="Rossmann-like_a/b/a_fold"/>
</dbReference>
<dbReference type="NCBIfam" id="TIGR00464">
    <property type="entry name" value="gltX_bact"/>
    <property type="match status" value="1"/>
</dbReference>
<dbReference type="PANTHER" id="PTHR43311">
    <property type="entry name" value="GLUTAMATE--TRNA LIGASE"/>
    <property type="match status" value="1"/>
</dbReference>
<dbReference type="PANTHER" id="PTHR43311:SF2">
    <property type="entry name" value="GLUTAMATE--TRNA LIGASE, MITOCHONDRIAL-RELATED"/>
    <property type="match status" value="1"/>
</dbReference>
<dbReference type="Pfam" id="PF19269">
    <property type="entry name" value="Anticodon_2"/>
    <property type="match status" value="1"/>
</dbReference>
<dbReference type="Pfam" id="PF00749">
    <property type="entry name" value="tRNA-synt_1c"/>
    <property type="match status" value="1"/>
</dbReference>
<dbReference type="PRINTS" id="PR00987">
    <property type="entry name" value="TRNASYNTHGLU"/>
</dbReference>
<dbReference type="SUPFAM" id="SSF48163">
    <property type="entry name" value="An anticodon-binding domain of class I aminoacyl-tRNA synthetases"/>
    <property type="match status" value="1"/>
</dbReference>
<dbReference type="SUPFAM" id="SSF52374">
    <property type="entry name" value="Nucleotidylyl transferase"/>
    <property type="match status" value="1"/>
</dbReference>
<dbReference type="PROSITE" id="PS00178">
    <property type="entry name" value="AA_TRNA_LIGASE_I"/>
    <property type="match status" value="1"/>
</dbReference>
<comment type="function">
    <text evidence="1">Catalyzes the attachment of glutamate to tRNA(Glu) in a two-step reaction: glutamate is first activated by ATP to form Glu-AMP and then transferred to the acceptor end of tRNA(Glu).</text>
</comment>
<comment type="catalytic activity">
    <reaction evidence="1">
        <text>tRNA(Glu) + L-glutamate + ATP = L-glutamyl-tRNA(Glu) + AMP + diphosphate</text>
        <dbReference type="Rhea" id="RHEA:23540"/>
        <dbReference type="Rhea" id="RHEA-COMP:9663"/>
        <dbReference type="Rhea" id="RHEA-COMP:9680"/>
        <dbReference type="ChEBI" id="CHEBI:29985"/>
        <dbReference type="ChEBI" id="CHEBI:30616"/>
        <dbReference type="ChEBI" id="CHEBI:33019"/>
        <dbReference type="ChEBI" id="CHEBI:78442"/>
        <dbReference type="ChEBI" id="CHEBI:78520"/>
        <dbReference type="ChEBI" id="CHEBI:456215"/>
        <dbReference type="EC" id="6.1.1.17"/>
    </reaction>
</comment>
<comment type="subunit">
    <text evidence="1">Monomer.</text>
</comment>
<comment type="subcellular location">
    <subcellularLocation>
        <location evidence="1">Cytoplasm</location>
    </subcellularLocation>
</comment>
<comment type="similarity">
    <text evidence="1">Belongs to the class-I aminoacyl-tRNA synthetase family. Glutamate--tRNA ligase type 1 subfamily.</text>
</comment>
<accession>Q1MBL0</accession>
<feature type="chain" id="PRO_1000001947" description="Glutamate--tRNA ligase">
    <location>
        <begin position="1"/>
        <end position="488"/>
    </location>
</feature>
<feature type="short sequence motif" description="'HIGH' region" evidence="1">
    <location>
        <begin position="16"/>
        <end position="26"/>
    </location>
</feature>
<feature type="short sequence motif" description="'KMSKS' region" evidence="1">
    <location>
        <begin position="257"/>
        <end position="261"/>
    </location>
</feature>
<feature type="binding site" evidence="1">
    <location>
        <position position="260"/>
    </location>
    <ligand>
        <name>ATP</name>
        <dbReference type="ChEBI" id="CHEBI:30616"/>
    </ligand>
</feature>
<protein>
    <recommendedName>
        <fullName evidence="1">Glutamate--tRNA ligase</fullName>
        <ecNumber evidence="1">6.1.1.17</ecNumber>
    </recommendedName>
    <alternativeName>
        <fullName evidence="1">Glutamyl-tRNA synthetase</fullName>
        <shortName evidence="1">GluRS</shortName>
    </alternativeName>
</protein>
<gene>
    <name evidence="1" type="primary">gltX</name>
    <name type="ordered locus">RL4184</name>
</gene>
<name>SYE_RHIJ3</name>
<keyword id="KW-0030">Aminoacyl-tRNA synthetase</keyword>
<keyword id="KW-0067">ATP-binding</keyword>
<keyword id="KW-0963">Cytoplasm</keyword>
<keyword id="KW-0436">Ligase</keyword>
<keyword id="KW-0547">Nucleotide-binding</keyword>
<keyword id="KW-0648">Protein biosynthesis</keyword>
<reference key="1">
    <citation type="journal article" date="2006" name="Genome Biol.">
        <title>The genome of Rhizobium leguminosarum has recognizable core and accessory components.</title>
        <authorList>
            <person name="Young J.P.W."/>
            <person name="Crossman L.C."/>
            <person name="Johnston A.W.B."/>
            <person name="Thomson N.R."/>
            <person name="Ghazoui Z.F."/>
            <person name="Hull K.H."/>
            <person name="Wexler M."/>
            <person name="Curson A.R.J."/>
            <person name="Todd J.D."/>
            <person name="Poole P.S."/>
            <person name="Mauchline T.H."/>
            <person name="East A.K."/>
            <person name="Quail M.A."/>
            <person name="Churcher C."/>
            <person name="Arrowsmith C."/>
            <person name="Cherevach I."/>
            <person name="Chillingworth T."/>
            <person name="Clarke K."/>
            <person name="Cronin A."/>
            <person name="Davis P."/>
            <person name="Fraser A."/>
            <person name="Hance Z."/>
            <person name="Hauser H."/>
            <person name="Jagels K."/>
            <person name="Moule S."/>
            <person name="Mungall K."/>
            <person name="Norbertczak H."/>
            <person name="Rabbinowitsch E."/>
            <person name="Sanders M."/>
            <person name="Simmonds M."/>
            <person name="Whitehead S."/>
            <person name="Parkhill J."/>
        </authorList>
    </citation>
    <scope>NUCLEOTIDE SEQUENCE [LARGE SCALE GENOMIC DNA]</scope>
    <source>
        <strain>DSM 114642 / LMG 32736 / 3841</strain>
    </source>
</reference>
<organism>
    <name type="scientific">Rhizobium johnstonii (strain DSM 114642 / LMG 32736 / 3841)</name>
    <name type="common">Rhizobium leguminosarum bv. viciae</name>
    <dbReference type="NCBI Taxonomy" id="216596"/>
    <lineage>
        <taxon>Bacteria</taxon>
        <taxon>Pseudomonadati</taxon>
        <taxon>Pseudomonadota</taxon>
        <taxon>Alphaproteobacteria</taxon>
        <taxon>Hyphomicrobiales</taxon>
        <taxon>Rhizobiaceae</taxon>
        <taxon>Rhizobium/Agrobacterium group</taxon>
        <taxon>Rhizobium</taxon>
        <taxon>Rhizobium johnstonii</taxon>
    </lineage>
</organism>